<evidence type="ECO:0000255" key="1">
    <source>
        <dbReference type="HAMAP-Rule" id="MF_00041"/>
    </source>
</evidence>
<dbReference type="EC" id="6.1.1.16" evidence="1"/>
<dbReference type="EMBL" id="CP000151">
    <property type="protein sequence ID" value="ABB08978.1"/>
    <property type="molecule type" value="Genomic_DNA"/>
</dbReference>
<dbReference type="RefSeq" id="WP_011352515.1">
    <property type="nucleotide sequence ID" value="NC_007510.1"/>
</dbReference>
<dbReference type="SMR" id="Q39EY8"/>
<dbReference type="GeneID" id="45095266"/>
<dbReference type="KEGG" id="bur:Bcep18194_A5384"/>
<dbReference type="PATRIC" id="fig|482957.22.peg.2335"/>
<dbReference type="HOGENOM" id="CLU_013528_0_1_4"/>
<dbReference type="Proteomes" id="UP000002705">
    <property type="component" value="Chromosome 1"/>
</dbReference>
<dbReference type="GO" id="GO:0005829">
    <property type="term" value="C:cytosol"/>
    <property type="evidence" value="ECO:0007669"/>
    <property type="project" value="TreeGrafter"/>
</dbReference>
<dbReference type="GO" id="GO:0005524">
    <property type="term" value="F:ATP binding"/>
    <property type="evidence" value="ECO:0007669"/>
    <property type="project" value="UniProtKB-UniRule"/>
</dbReference>
<dbReference type="GO" id="GO:0004817">
    <property type="term" value="F:cysteine-tRNA ligase activity"/>
    <property type="evidence" value="ECO:0007669"/>
    <property type="project" value="UniProtKB-UniRule"/>
</dbReference>
<dbReference type="GO" id="GO:0008270">
    <property type="term" value="F:zinc ion binding"/>
    <property type="evidence" value="ECO:0007669"/>
    <property type="project" value="UniProtKB-UniRule"/>
</dbReference>
<dbReference type="GO" id="GO:0006423">
    <property type="term" value="P:cysteinyl-tRNA aminoacylation"/>
    <property type="evidence" value="ECO:0007669"/>
    <property type="project" value="UniProtKB-UniRule"/>
</dbReference>
<dbReference type="CDD" id="cd07963">
    <property type="entry name" value="Anticodon_Ia_Cys"/>
    <property type="match status" value="1"/>
</dbReference>
<dbReference type="CDD" id="cd00672">
    <property type="entry name" value="CysRS_core"/>
    <property type="match status" value="1"/>
</dbReference>
<dbReference type="FunFam" id="3.40.50.620:FF:000009">
    <property type="entry name" value="Cysteine--tRNA ligase"/>
    <property type="match status" value="1"/>
</dbReference>
<dbReference type="Gene3D" id="1.20.120.1910">
    <property type="entry name" value="Cysteine-tRNA ligase, C-terminal anti-codon recognition domain"/>
    <property type="match status" value="1"/>
</dbReference>
<dbReference type="Gene3D" id="3.40.50.620">
    <property type="entry name" value="HUPs"/>
    <property type="match status" value="1"/>
</dbReference>
<dbReference type="HAMAP" id="MF_00041">
    <property type="entry name" value="Cys_tRNA_synth"/>
    <property type="match status" value="1"/>
</dbReference>
<dbReference type="InterPro" id="IPR015803">
    <property type="entry name" value="Cys-tRNA-ligase"/>
</dbReference>
<dbReference type="InterPro" id="IPR015273">
    <property type="entry name" value="Cys-tRNA-synt_Ia_DALR"/>
</dbReference>
<dbReference type="InterPro" id="IPR024909">
    <property type="entry name" value="Cys-tRNA/MSH_ligase"/>
</dbReference>
<dbReference type="InterPro" id="IPR014729">
    <property type="entry name" value="Rossmann-like_a/b/a_fold"/>
</dbReference>
<dbReference type="InterPro" id="IPR032678">
    <property type="entry name" value="tRNA-synt_1_cat_dom"/>
</dbReference>
<dbReference type="InterPro" id="IPR009080">
    <property type="entry name" value="tRNAsynth_Ia_anticodon-bd"/>
</dbReference>
<dbReference type="NCBIfam" id="TIGR00435">
    <property type="entry name" value="cysS"/>
    <property type="match status" value="1"/>
</dbReference>
<dbReference type="PANTHER" id="PTHR10890:SF3">
    <property type="entry name" value="CYSTEINE--TRNA LIGASE, CYTOPLASMIC"/>
    <property type="match status" value="1"/>
</dbReference>
<dbReference type="PANTHER" id="PTHR10890">
    <property type="entry name" value="CYSTEINYL-TRNA SYNTHETASE"/>
    <property type="match status" value="1"/>
</dbReference>
<dbReference type="Pfam" id="PF09190">
    <property type="entry name" value="DALR_2"/>
    <property type="match status" value="1"/>
</dbReference>
<dbReference type="Pfam" id="PF01406">
    <property type="entry name" value="tRNA-synt_1e"/>
    <property type="match status" value="1"/>
</dbReference>
<dbReference type="PRINTS" id="PR00983">
    <property type="entry name" value="TRNASYNTHCYS"/>
</dbReference>
<dbReference type="SMART" id="SM00840">
    <property type="entry name" value="DALR_2"/>
    <property type="match status" value="1"/>
</dbReference>
<dbReference type="SUPFAM" id="SSF47323">
    <property type="entry name" value="Anticodon-binding domain of a subclass of class I aminoacyl-tRNA synthetases"/>
    <property type="match status" value="1"/>
</dbReference>
<dbReference type="SUPFAM" id="SSF52374">
    <property type="entry name" value="Nucleotidylyl transferase"/>
    <property type="match status" value="1"/>
</dbReference>
<name>SYC2_BURL3</name>
<keyword id="KW-0030">Aminoacyl-tRNA synthetase</keyword>
<keyword id="KW-0067">ATP-binding</keyword>
<keyword id="KW-0963">Cytoplasm</keyword>
<keyword id="KW-0436">Ligase</keyword>
<keyword id="KW-0479">Metal-binding</keyword>
<keyword id="KW-0547">Nucleotide-binding</keyword>
<keyword id="KW-0648">Protein biosynthesis</keyword>
<keyword id="KW-0862">Zinc</keyword>
<gene>
    <name evidence="1" type="primary">cysS2</name>
    <name type="ordered locus">Bcep18194_A5384</name>
</gene>
<feature type="chain" id="PRO_0000240897" description="Cysteine--tRNA ligase 2">
    <location>
        <begin position="1"/>
        <end position="465"/>
    </location>
</feature>
<feature type="short sequence motif" description="'HIGH' region">
    <location>
        <begin position="32"/>
        <end position="42"/>
    </location>
</feature>
<feature type="short sequence motif" description="'KMSKS' region">
    <location>
        <begin position="271"/>
        <end position="275"/>
    </location>
</feature>
<feature type="binding site" evidence="1">
    <location>
        <position position="30"/>
    </location>
    <ligand>
        <name>Zn(2+)</name>
        <dbReference type="ChEBI" id="CHEBI:29105"/>
    </ligand>
</feature>
<feature type="binding site" evidence="1">
    <location>
        <position position="214"/>
    </location>
    <ligand>
        <name>Zn(2+)</name>
        <dbReference type="ChEBI" id="CHEBI:29105"/>
    </ligand>
</feature>
<feature type="binding site" evidence="1">
    <location>
        <position position="239"/>
    </location>
    <ligand>
        <name>Zn(2+)</name>
        <dbReference type="ChEBI" id="CHEBI:29105"/>
    </ligand>
</feature>
<feature type="binding site" evidence="1">
    <location>
        <position position="243"/>
    </location>
    <ligand>
        <name>Zn(2+)</name>
        <dbReference type="ChEBI" id="CHEBI:29105"/>
    </ligand>
</feature>
<feature type="binding site" evidence="1">
    <location>
        <position position="274"/>
    </location>
    <ligand>
        <name>ATP</name>
        <dbReference type="ChEBI" id="CHEBI:30616"/>
    </ligand>
</feature>
<protein>
    <recommendedName>
        <fullName evidence="1">Cysteine--tRNA ligase 2</fullName>
        <ecNumber evidence="1">6.1.1.16</ecNumber>
    </recommendedName>
    <alternativeName>
        <fullName evidence="1">Cysteinyl-tRNA synthetase 2</fullName>
        <shortName evidence="1">CysRS 2</shortName>
    </alternativeName>
</protein>
<sequence length="465" mass="52209">MESLRIYNTLARDKQVFVPRQSGEVRMYVCGITVYDYCHVGHARMLVVFDLVQRWLRAIGYRVTYVRNITDIDDKIIRRAVENGETIKSLTDRFIGAMHDDESALGIQRPDIEPRATEFIPQMLGMIETLETNGYAYQATDGDVNYSVRKFANYGKLSGKSLDDLRAGERVAANDAKEDPLDFVLWKRAKPEDPEGTSWASKYGMGRPGWHIECSAMGCTLLGEHFDIHGGGQDLQFPHHENEIAQSEGATGQTFVNYWMHNGFVQVDNEKMSKSLGNFFTIREVLERYDAEVMRFFIVRTHYRSPLNYSDVHLDDARASLTRLYTALKDVEADTLALDWNEPHAQRFAAAMNDDFNTPVAVATLFELAGEVNRTRDASLARQLKQLAGLLGLLGREPRAFLQQASGAAQAGGLAADEIEAKIAARVAAKQAKDYAEADRIRAELLETGIALEDKPGGSTEWRRV</sequence>
<reference key="1">
    <citation type="submission" date="2005-10" db="EMBL/GenBank/DDBJ databases">
        <title>Complete sequence of chromosome 1 of Burkholderia sp. 383.</title>
        <authorList>
            <consortium name="US DOE Joint Genome Institute"/>
            <person name="Copeland A."/>
            <person name="Lucas S."/>
            <person name="Lapidus A."/>
            <person name="Barry K."/>
            <person name="Detter J.C."/>
            <person name="Glavina T."/>
            <person name="Hammon N."/>
            <person name="Israni S."/>
            <person name="Pitluck S."/>
            <person name="Chain P."/>
            <person name="Malfatti S."/>
            <person name="Shin M."/>
            <person name="Vergez L."/>
            <person name="Schmutz J."/>
            <person name="Larimer F."/>
            <person name="Land M."/>
            <person name="Kyrpides N."/>
            <person name="Lykidis A."/>
            <person name="Richardson P."/>
        </authorList>
    </citation>
    <scope>NUCLEOTIDE SEQUENCE [LARGE SCALE GENOMIC DNA]</scope>
    <source>
        <strain>ATCC 17760 / DSM 23089 / LMG 22485 / NCIMB 9086 / R18194 / 383</strain>
    </source>
</reference>
<organism>
    <name type="scientific">Burkholderia lata (strain ATCC 17760 / DSM 23089 / LMG 22485 / NCIMB 9086 / R18194 / 383)</name>
    <dbReference type="NCBI Taxonomy" id="482957"/>
    <lineage>
        <taxon>Bacteria</taxon>
        <taxon>Pseudomonadati</taxon>
        <taxon>Pseudomonadota</taxon>
        <taxon>Betaproteobacteria</taxon>
        <taxon>Burkholderiales</taxon>
        <taxon>Burkholderiaceae</taxon>
        <taxon>Burkholderia</taxon>
        <taxon>Burkholderia cepacia complex</taxon>
    </lineage>
</organism>
<proteinExistence type="inferred from homology"/>
<comment type="catalytic activity">
    <reaction evidence="1">
        <text>tRNA(Cys) + L-cysteine + ATP = L-cysteinyl-tRNA(Cys) + AMP + diphosphate</text>
        <dbReference type="Rhea" id="RHEA:17773"/>
        <dbReference type="Rhea" id="RHEA-COMP:9661"/>
        <dbReference type="Rhea" id="RHEA-COMP:9679"/>
        <dbReference type="ChEBI" id="CHEBI:30616"/>
        <dbReference type="ChEBI" id="CHEBI:33019"/>
        <dbReference type="ChEBI" id="CHEBI:35235"/>
        <dbReference type="ChEBI" id="CHEBI:78442"/>
        <dbReference type="ChEBI" id="CHEBI:78517"/>
        <dbReference type="ChEBI" id="CHEBI:456215"/>
        <dbReference type="EC" id="6.1.1.16"/>
    </reaction>
</comment>
<comment type="cofactor">
    <cofactor evidence="1">
        <name>Zn(2+)</name>
        <dbReference type="ChEBI" id="CHEBI:29105"/>
    </cofactor>
    <text evidence="1">Binds 1 zinc ion per subunit.</text>
</comment>
<comment type="subunit">
    <text evidence="1">Monomer.</text>
</comment>
<comment type="subcellular location">
    <subcellularLocation>
        <location evidence="1">Cytoplasm</location>
    </subcellularLocation>
</comment>
<comment type="similarity">
    <text evidence="1">Belongs to the class-I aminoacyl-tRNA synthetase family.</text>
</comment>
<accession>Q39EY8</accession>